<dbReference type="EMBL" id="CP001074">
    <property type="protein sequence ID" value="ACE90744.1"/>
    <property type="molecule type" value="Genomic_DNA"/>
</dbReference>
<dbReference type="SMR" id="B3PWU6"/>
<dbReference type="KEGG" id="rec:RHECIAT_CH0001774"/>
<dbReference type="eggNOG" id="COG0203">
    <property type="taxonomic scope" value="Bacteria"/>
</dbReference>
<dbReference type="HOGENOM" id="CLU_074407_2_0_5"/>
<dbReference type="Proteomes" id="UP000008817">
    <property type="component" value="Chromosome"/>
</dbReference>
<dbReference type="GO" id="GO:0022625">
    <property type="term" value="C:cytosolic large ribosomal subunit"/>
    <property type="evidence" value="ECO:0007669"/>
    <property type="project" value="TreeGrafter"/>
</dbReference>
<dbReference type="GO" id="GO:0003735">
    <property type="term" value="F:structural constituent of ribosome"/>
    <property type="evidence" value="ECO:0007669"/>
    <property type="project" value="InterPro"/>
</dbReference>
<dbReference type="GO" id="GO:0006412">
    <property type="term" value="P:translation"/>
    <property type="evidence" value="ECO:0007669"/>
    <property type="project" value="UniProtKB-UniRule"/>
</dbReference>
<dbReference type="FunFam" id="3.90.1030.10:FF:000001">
    <property type="entry name" value="50S ribosomal protein L17"/>
    <property type="match status" value="1"/>
</dbReference>
<dbReference type="Gene3D" id="3.90.1030.10">
    <property type="entry name" value="Ribosomal protein L17"/>
    <property type="match status" value="1"/>
</dbReference>
<dbReference type="HAMAP" id="MF_01368">
    <property type="entry name" value="Ribosomal_bL17"/>
    <property type="match status" value="1"/>
</dbReference>
<dbReference type="InterPro" id="IPR000456">
    <property type="entry name" value="Ribosomal_bL17"/>
</dbReference>
<dbReference type="InterPro" id="IPR047859">
    <property type="entry name" value="Ribosomal_bL17_CS"/>
</dbReference>
<dbReference type="InterPro" id="IPR036373">
    <property type="entry name" value="Ribosomal_bL17_sf"/>
</dbReference>
<dbReference type="NCBIfam" id="TIGR00059">
    <property type="entry name" value="L17"/>
    <property type="match status" value="1"/>
</dbReference>
<dbReference type="PANTHER" id="PTHR14413:SF16">
    <property type="entry name" value="LARGE RIBOSOMAL SUBUNIT PROTEIN BL17M"/>
    <property type="match status" value="1"/>
</dbReference>
<dbReference type="PANTHER" id="PTHR14413">
    <property type="entry name" value="RIBOSOMAL PROTEIN L17"/>
    <property type="match status" value="1"/>
</dbReference>
<dbReference type="Pfam" id="PF01196">
    <property type="entry name" value="Ribosomal_L17"/>
    <property type="match status" value="1"/>
</dbReference>
<dbReference type="SUPFAM" id="SSF64263">
    <property type="entry name" value="Prokaryotic ribosomal protein L17"/>
    <property type="match status" value="1"/>
</dbReference>
<dbReference type="PROSITE" id="PS01167">
    <property type="entry name" value="RIBOSOMAL_L17"/>
    <property type="match status" value="1"/>
</dbReference>
<comment type="subunit">
    <text evidence="1">Part of the 50S ribosomal subunit. Contacts protein L32.</text>
</comment>
<comment type="similarity">
    <text evidence="1">Belongs to the bacterial ribosomal protein bL17 family.</text>
</comment>
<sequence>MRHAKAGRKLNRTASHRKAMFANMAASLITHEQIVTTLPKAKEIRPIVEKLVTLGKRGDLHARRQAISQIRDAAVVSKLFDTIATRYATRNGGYLRIMKAGFRQGDNAAMAVIEFVDRDTYAKGAADKARVAAEEQAVAA</sequence>
<reference key="1">
    <citation type="journal article" date="2010" name="Appl. Environ. Microbiol.">
        <title>Conserved symbiotic plasmid DNA sequences in the multireplicon pangenomic structure of Rhizobium etli.</title>
        <authorList>
            <person name="Gonzalez V."/>
            <person name="Acosta J.L."/>
            <person name="Santamaria R.I."/>
            <person name="Bustos P."/>
            <person name="Fernandez J.L."/>
            <person name="Hernandez Gonzalez I.L."/>
            <person name="Diaz R."/>
            <person name="Flores M."/>
            <person name="Palacios R."/>
            <person name="Mora J."/>
            <person name="Davila G."/>
        </authorList>
    </citation>
    <scope>NUCLEOTIDE SEQUENCE [LARGE SCALE GENOMIC DNA]</scope>
    <source>
        <strain>CIAT 652</strain>
    </source>
</reference>
<proteinExistence type="inferred from homology"/>
<organism>
    <name type="scientific">Rhizobium etli (strain CIAT 652)</name>
    <dbReference type="NCBI Taxonomy" id="491916"/>
    <lineage>
        <taxon>Bacteria</taxon>
        <taxon>Pseudomonadati</taxon>
        <taxon>Pseudomonadota</taxon>
        <taxon>Alphaproteobacteria</taxon>
        <taxon>Hyphomicrobiales</taxon>
        <taxon>Rhizobiaceae</taxon>
        <taxon>Rhizobium/Agrobacterium group</taxon>
        <taxon>Rhizobium</taxon>
    </lineage>
</organism>
<protein>
    <recommendedName>
        <fullName evidence="1">Large ribosomal subunit protein bL17</fullName>
    </recommendedName>
    <alternativeName>
        <fullName evidence="2">50S ribosomal protein L17</fullName>
    </alternativeName>
</protein>
<keyword id="KW-0687">Ribonucleoprotein</keyword>
<keyword id="KW-0689">Ribosomal protein</keyword>
<feature type="chain" id="PRO_1000144471" description="Large ribosomal subunit protein bL17">
    <location>
        <begin position="1"/>
        <end position="140"/>
    </location>
</feature>
<gene>
    <name evidence="1" type="primary">rplQ</name>
    <name type="ordered locus">RHECIAT_CH0001774</name>
</gene>
<evidence type="ECO:0000255" key="1">
    <source>
        <dbReference type="HAMAP-Rule" id="MF_01368"/>
    </source>
</evidence>
<evidence type="ECO:0000305" key="2"/>
<name>RL17_RHIE6</name>
<accession>B3PWU6</accession>